<comment type="function">
    <text evidence="1">Specifically methylates the N4 position of cytidine in position 1402 (C1402) of 16S rRNA.</text>
</comment>
<comment type="catalytic activity">
    <reaction evidence="1">
        <text>cytidine(1402) in 16S rRNA + S-adenosyl-L-methionine = N(4)-methylcytidine(1402) in 16S rRNA + S-adenosyl-L-homocysteine + H(+)</text>
        <dbReference type="Rhea" id="RHEA:42928"/>
        <dbReference type="Rhea" id="RHEA-COMP:10286"/>
        <dbReference type="Rhea" id="RHEA-COMP:10287"/>
        <dbReference type="ChEBI" id="CHEBI:15378"/>
        <dbReference type="ChEBI" id="CHEBI:57856"/>
        <dbReference type="ChEBI" id="CHEBI:59789"/>
        <dbReference type="ChEBI" id="CHEBI:74506"/>
        <dbReference type="ChEBI" id="CHEBI:82748"/>
        <dbReference type="EC" id="2.1.1.199"/>
    </reaction>
</comment>
<comment type="subcellular location">
    <subcellularLocation>
        <location evidence="1">Cytoplasm</location>
    </subcellularLocation>
</comment>
<comment type="similarity">
    <text evidence="1">Belongs to the methyltransferase superfamily. RsmH family.</text>
</comment>
<name>RSMH_AZOSB</name>
<keyword id="KW-0963">Cytoplasm</keyword>
<keyword id="KW-0489">Methyltransferase</keyword>
<keyword id="KW-1185">Reference proteome</keyword>
<keyword id="KW-0698">rRNA processing</keyword>
<keyword id="KW-0949">S-adenosyl-L-methionine</keyword>
<keyword id="KW-0808">Transferase</keyword>
<sequence>MSAQLQHVSVLLTEAVDALAIKPEGIYVDGTFGRGGHSRAVLARLGAGGRLIAFDRDPAAIAAGQAIADPRLELVHAPFSEFAVVLDRLGVSAVDGVLLDLGVSSPQLDDASRGMSFRFDAPLDMRMDTSRGRTVAEWLAEASVAEITEVIRDYGEERFAYAIAKAIAAARTGGAIATTGQLAAIVEKAVRTREPGQHPATRSFQALRIFINQELEELTTVLPDCVARLSEGGRLVVISFHSLEDRIVKRFLRDEARPPQLPSRLPVRAADLPPPRLQLVGKAQRPGEAEVAANPRARSAVMRVAERCGVAA</sequence>
<evidence type="ECO:0000255" key="1">
    <source>
        <dbReference type="HAMAP-Rule" id="MF_01007"/>
    </source>
</evidence>
<organism>
    <name type="scientific">Azoarcus sp. (strain BH72)</name>
    <dbReference type="NCBI Taxonomy" id="418699"/>
    <lineage>
        <taxon>Bacteria</taxon>
        <taxon>Pseudomonadati</taxon>
        <taxon>Pseudomonadota</taxon>
        <taxon>Betaproteobacteria</taxon>
        <taxon>Rhodocyclales</taxon>
        <taxon>Zoogloeaceae</taxon>
        <taxon>Azoarcus</taxon>
    </lineage>
</organism>
<protein>
    <recommendedName>
        <fullName evidence="1">Ribosomal RNA small subunit methyltransferase H</fullName>
        <ecNumber evidence="1">2.1.1.199</ecNumber>
    </recommendedName>
    <alternativeName>
        <fullName evidence="1">16S rRNA m(4)C1402 methyltransferase</fullName>
    </alternativeName>
    <alternativeName>
        <fullName evidence="1">rRNA (cytosine-N(4)-)-methyltransferase RsmH</fullName>
    </alternativeName>
</protein>
<gene>
    <name evidence="1" type="primary">rsmH</name>
    <name type="synonym">mraW</name>
    <name type="ordered locus">azo0876</name>
</gene>
<feature type="chain" id="PRO_0000386722" description="Ribosomal RNA small subunit methyltransferase H">
    <location>
        <begin position="1"/>
        <end position="312"/>
    </location>
</feature>
<feature type="binding site" evidence="1">
    <location>
        <begin position="35"/>
        <end position="37"/>
    </location>
    <ligand>
        <name>S-adenosyl-L-methionine</name>
        <dbReference type="ChEBI" id="CHEBI:59789"/>
    </ligand>
</feature>
<feature type="binding site" evidence="1">
    <location>
        <position position="55"/>
    </location>
    <ligand>
        <name>S-adenosyl-L-methionine</name>
        <dbReference type="ChEBI" id="CHEBI:59789"/>
    </ligand>
</feature>
<feature type="binding site" evidence="1">
    <location>
        <position position="79"/>
    </location>
    <ligand>
        <name>S-adenosyl-L-methionine</name>
        <dbReference type="ChEBI" id="CHEBI:59789"/>
    </ligand>
</feature>
<feature type="binding site" evidence="1">
    <location>
        <position position="100"/>
    </location>
    <ligand>
        <name>S-adenosyl-L-methionine</name>
        <dbReference type="ChEBI" id="CHEBI:59789"/>
    </ligand>
</feature>
<feature type="binding site" evidence="1">
    <location>
        <position position="107"/>
    </location>
    <ligand>
        <name>S-adenosyl-L-methionine</name>
        <dbReference type="ChEBI" id="CHEBI:59789"/>
    </ligand>
</feature>
<dbReference type="EC" id="2.1.1.199" evidence="1"/>
<dbReference type="EMBL" id="AM406670">
    <property type="protein sequence ID" value="CAL93493.1"/>
    <property type="molecule type" value="Genomic_DNA"/>
</dbReference>
<dbReference type="RefSeq" id="WP_011764610.1">
    <property type="nucleotide sequence ID" value="NC_008702.1"/>
</dbReference>
<dbReference type="SMR" id="A1K3T8"/>
<dbReference type="STRING" id="62928.azo0876"/>
<dbReference type="KEGG" id="azo:azo0876"/>
<dbReference type="eggNOG" id="COG0275">
    <property type="taxonomic scope" value="Bacteria"/>
</dbReference>
<dbReference type="HOGENOM" id="CLU_038422_2_0_4"/>
<dbReference type="Proteomes" id="UP000002588">
    <property type="component" value="Chromosome"/>
</dbReference>
<dbReference type="GO" id="GO:0005737">
    <property type="term" value="C:cytoplasm"/>
    <property type="evidence" value="ECO:0007669"/>
    <property type="project" value="UniProtKB-SubCell"/>
</dbReference>
<dbReference type="GO" id="GO:0071424">
    <property type="term" value="F:rRNA (cytosine-N4-)-methyltransferase activity"/>
    <property type="evidence" value="ECO:0007669"/>
    <property type="project" value="UniProtKB-UniRule"/>
</dbReference>
<dbReference type="GO" id="GO:0070475">
    <property type="term" value="P:rRNA base methylation"/>
    <property type="evidence" value="ECO:0007669"/>
    <property type="project" value="UniProtKB-UniRule"/>
</dbReference>
<dbReference type="Gene3D" id="1.10.150.170">
    <property type="entry name" value="Putative methyltransferase TM0872, insert domain"/>
    <property type="match status" value="1"/>
</dbReference>
<dbReference type="Gene3D" id="3.40.50.150">
    <property type="entry name" value="Vaccinia Virus protein VP39"/>
    <property type="match status" value="1"/>
</dbReference>
<dbReference type="HAMAP" id="MF_01007">
    <property type="entry name" value="16SrRNA_methyltr_H"/>
    <property type="match status" value="1"/>
</dbReference>
<dbReference type="InterPro" id="IPR002903">
    <property type="entry name" value="RsmH"/>
</dbReference>
<dbReference type="InterPro" id="IPR023397">
    <property type="entry name" value="SAM-dep_MeTrfase_MraW_recog"/>
</dbReference>
<dbReference type="InterPro" id="IPR029063">
    <property type="entry name" value="SAM-dependent_MTases_sf"/>
</dbReference>
<dbReference type="NCBIfam" id="TIGR00006">
    <property type="entry name" value="16S rRNA (cytosine(1402)-N(4))-methyltransferase RsmH"/>
    <property type="match status" value="1"/>
</dbReference>
<dbReference type="PANTHER" id="PTHR11265:SF0">
    <property type="entry name" value="12S RRNA N4-METHYLCYTIDINE METHYLTRANSFERASE"/>
    <property type="match status" value="1"/>
</dbReference>
<dbReference type="PANTHER" id="PTHR11265">
    <property type="entry name" value="S-ADENOSYL-METHYLTRANSFERASE MRAW"/>
    <property type="match status" value="1"/>
</dbReference>
<dbReference type="Pfam" id="PF01795">
    <property type="entry name" value="Methyltransf_5"/>
    <property type="match status" value="1"/>
</dbReference>
<dbReference type="PIRSF" id="PIRSF004486">
    <property type="entry name" value="MraW"/>
    <property type="match status" value="1"/>
</dbReference>
<dbReference type="SUPFAM" id="SSF81799">
    <property type="entry name" value="Putative methyltransferase TM0872, insert domain"/>
    <property type="match status" value="1"/>
</dbReference>
<dbReference type="SUPFAM" id="SSF53335">
    <property type="entry name" value="S-adenosyl-L-methionine-dependent methyltransferases"/>
    <property type="match status" value="1"/>
</dbReference>
<reference key="1">
    <citation type="journal article" date="2006" name="Nat. Biotechnol.">
        <title>Complete genome of the mutualistic, N2-fixing grass endophyte Azoarcus sp. strain BH72.</title>
        <authorList>
            <person name="Krause A."/>
            <person name="Ramakumar A."/>
            <person name="Bartels D."/>
            <person name="Battistoni F."/>
            <person name="Bekel T."/>
            <person name="Boch J."/>
            <person name="Boehm M."/>
            <person name="Friedrich F."/>
            <person name="Hurek T."/>
            <person name="Krause L."/>
            <person name="Linke B."/>
            <person name="McHardy A.C."/>
            <person name="Sarkar A."/>
            <person name="Schneiker S."/>
            <person name="Syed A.A."/>
            <person name="Thauer R."/>
            <person name="Vorhoelter F.-J."/>
            <person name="Weidner S."/>
            <person name="Puehler A."/>
            <person name="Reinhold-Hurek B."/>
            <person name="Kaiser O."/>
            <person name="Goesmann A."/>
        </authorList>
    </citation>
    <scope>NUCLEOTIDE SEQUENCE [LARGE SCALE GENOMIC DNA]</scope>
    <source>
        <strain>BH72</strain>
    </source>
</reference>
<accession>A1K3T8</accession>
<proteinExistence type="inferred from homology"/>